<organism>
    <name type="scientific">Mus musculus</name>
    <name type="common">Mouse</name>
    <dbReference type="NCBI Taxonomy" id="10090"/>
    <lineage>
        <taxon>Eukaryota</taxon>
        <taxon>Metazoa</taxon>
        <taxon>Chordata</taxon>
        <taxon>Craniata</taxon>
        <taxon>Vertebrata</taxon>
        <taxon>Euteleostomi</taxon>
        <taxon>Mammalia</taxon>
        <taxon>Eutheria</taxon>
        <taxon>Euarchontoglires</taxon>
        <taxon>Glires</taxon>
        <taxon>Rodentia</taxon>
        <taxon>Myomorpha</taxon>
        <taxon>Muroidea</taxon>
        <taxon>Muridae</taxon>
        <taxon>Murinae</taxon>
        <taxon>Mus</taxon>
        <taxon>Mus</taxon>
    </lineage>
</organism>
<dbReference type="EC" id="2.7.10.2"/>
<dbReference type="EMBL" id="X12616">
    <property type="protein sequence ID" value="CAA31138.1"/>
    <property type="molecule type" value="mRNA"/>
</dbReference>
<dbReference type="EMBL" id="AF542394">
    <property type="protein sequence ID" value="AAN33122.1"/>
    <property type="molecule type" value="Genomic_DNA"/>
</dbReference>
<dbReference type="EMBL" id="M33421">
    <property type="protein sequence ID" value="AAA40012.1"/>
    <property type="molecule type" value="mRNA"/>
</dbReference>
<dbReference type="EMBL" id="AK143639">
    <property type="protein sequence ID" value="BAE25475.1"/>
    <property type="molecule type" value="mRNA"/>
</dbReference>
<dbReference type="EMBL" id="AK170418">
    <property type="protein sequence ID" value="BAE41784.1"/>
    <property type="molecule type" value="mRNA"/>
</dbReference>
<dbReference type="EMBL" id="BC129919">
    <property type="protein sequence ID" value="AAI29920.1"/>
    <property type="molecule type" value="mRNA"/>
</dbReference>
<dbReference type="CCDS" id="CCDS39999.1"/>
<dbReference type="PIR" id="I48347">
    <property type="entry name" value="I48347"/>
</dbReference>
<dbReference type="RefSeq" id="NP_034324.2">
    <property type="nucleotide sequence ID" value="NM_010194.2"/>
</dbReference>
<dbReference type="RefSeq" id="XP_006540667.1">
    <property type="nucleotide sequence ID" value="XM_006540604.5"/>
</dbReference>
<dbReference type="SMR" id="P16879"/>
<dbReference type="BioGRID" id="199634">
    <property type="interactions" value="14"/>
</dbReference>
<dbReference type="FunCoup" id="P16879">
    <property type="interactions" value="120"/>
</dbReference>
<dbReference type="IntAct" id="P16879">
    <property type="interactions" value="2"/>
</dbReference>
<dbReference type="STRING" id="10090.ENSMUSP00000079733"/>
<dbReference type="GlyGen" id="P16879">
    <property type="glycosylation" value="1 site, 1 O-linked glycan (1 site)"/>
</dbReference>
<dbReference type="iPTMnet" id="P16879"/>
<dbReference type="PhosphoSitePlus" id="P16879"/>
<dbReference type="jPOST" id="P16879"/>
<dbReference type="PaxDb" id="10090-ENSMUSP00000079733"/>
<dbReference type="PeptideAtlas" id="P16879"/>
<dbReference type="ProteomicsDB" id="270982"/>
<dbReference type="Pumba" id="P16879"/>
<dbReference type="Antibodypedia" id="734">
    <property type="antibodies" value="467 antibodies from 35 providers"/>
</dbReference>
<dbReference type="DNASU" id="14159"/>
<dbReference type="Ensembl" id="ENSMUST00000080932.8">
    <property type="protein sequence ID" value="ENSMUSP00000079733.7"/>
    <property type="gene ID" value="ENSMUSG00000053158.11"/>
</dbReference>
<dbReference type="GeneID" id="14159"/>
<dbReference type="KEGG" id="mmu:14159"/>
<dbReference type="UCSC" id="uc009ias.1">
    <property type="organism name" value="mouse"/>
</dbReference>
<dbReference type="AGR" id="MGI:95514"/>
<dbReference type="CTD" id="2242"/>
<dbReference type="MGI" id="MGI:95514">
    <property type="gene designation" value="Fes"/>
</dbReference>
<dbReference type="VEuPathDB" id="HostDB:ENSMUSG00000053158"/>
<dbReference type="eggNOG" id="KOG0194">
    <property type="taxonomic scope" value="Eukaryota"/>
</dbReference>
<dbReference type="GeneTree" id="ENSGT00940000158881"/>
<dbReference type="HOGENOM" id="CLU_005265_0_1_1"/>
<dbReference type="InParanoid" id="P16879"/>
<dbReference type="OMA" id="QNTENMY"/>
<dbReference type="OrthoDB" id="546826at2759"/>
<dbReference type="PhylomeDB" id="P16879"/>
<dbReference type="TreeFam" id="TF315363"/>
<dbReference type="BRENDA" id="2.7.10.2">
    <property type="organism ID" value="3474"/>
</dbReference>
<dbReference type="Reactome" id="R-MMU-1433557">
    <property type="pathway name" value="Signaling by SCF-KIT"/>
</dbReference>
<dbReference type="Reactome" id="R-MMU-399954">
    <property type="pathway name" value="Sema3A PAK dependent Axon repulsion"/>
</dbReference>
<dbReference type="Reactome" id="R-MMU-399956">
    <property type="pathway name" value="CRMPs in Sema3A signaling"/>
</dbReference>
<dbReference type="BioGRID-ORCS" id="14159">
    <property type="hits" value="3 hits in 79 CRISPR screens"/>
</dbReference>
<dbReference type="CD-CODE" id="01CA17F3">
    <property type="entry name" value="Centrosome"/>
</dbReference>
<dbReference type="ChiTaRS" id="Fes">
    <property type="organism name" value="mouse"/>
</dbReference>
<dbReference type="PRO" id="PR:P16879"/>
<dbReference type="Proteomes" id="UP000000589">
    <property type="component" value="Chromosome 7"/>
</dbReference>
<dbReference type="RNAct" id="P16879">
    <property type="molecule type" value="protein"/>
</dbReference>
<dbReference type="Bgee" id="ENSMUSG00000053158">
    <property type="expression patterns" value="Expressed in granulocyte and 167 other cell types or tissues"/>
</dbReference>
<dbReference type="ExpressionAtlas" id="P16879">
    <property type="expression patterns" value="baseline and differential"/>
</dbReference>
<dbReference type="GO" id="GO:0005737">
    <property type="term" value="C:cytoplasm"/>
    <property type="evidence" value="ECO:0000250"/>
    <property type="project" value="UniProtKB"/>
</dbReference>
<dbReference type="GO" id="GO:0009898">
    <property type="term" value="C:cytoplasmic side of plasma membrane"/>
    <property type="evidence" value="ECO:0000250"/>
    <property type="project" value="UniProtKB"/>
</dbReference>
<dbReference type="GO" id="GO:0031410">
    <property type="term" value="C:cytoplasmic vesicle"/>
    <property type="evidence" value="ECO:0007669"/>
    <property type="project" value="UniProtKB-KW"/>
</dbReference>
<dbReference type="GO" id="GO:0005829">
    <property type="term" value="C:cytosol"/>
    <property type="evidence" value="ECO:0000304"/>
    <property type="project" value="Reactome"/>
</dbReference>
<dbReference type="GO" id="GO:0005925">
    <property type="term" value="C:focal adhesion"/>
    <property type="evidence" value="ECO:0000250"/>
    <property type="project" value="UniProtKB"/>
</dbReference>
<dbReference type="GO" id="GO:0005794">
    <property type="term" value="C:Golgi apparatus"/>
    <property type="evidence" value="ECO:0007669"/>
    <property type="project" value="UniProtKB-SubCell"/>
</dbReference>
<dbReference type="GO" id="GO:0015630">
    <property type="term" value="C:microtubule cytoskeleton"/>
    <property type="evidence" value="ECO:0000314"/>
    <property type="project" value="MGI"/>
</dbReference>
<dbReference type="GO" id="GO:0005524">
    <property type="term" value="F:ATP binding"/>
    <property type="evidence" value="ECO:0007669"/>
    <property type="project" value="UniProtKB-KW"/>
</dbReference>
<dbReference type="GO" id="GO:0034987">
    <property type="term" value="F:immunoglobulin receptor binding"/>
    <property type="evidence" value="ECO:0000250"/>
    <property type="project" value="UniProtKB"/>
</dbReference>
<dbReference type="GO" id="GO:0008017">
    <property type="term" value="F:microtubule binding"/>
    <property type="evidence" value="ECO:0000314"/>
    <property type="project" value="MGI"/>
</dbReference>
<dbReference type="GO" id="GO:0004715">
    <property type="term" value="F:non-membrane spanning protein tyrosine kinase activity"/>
    <property type="evidence" value="ECO:0000250"/>
    <property type="project" value="UniProtKB"/>
</dbReference>
<dbReference type="GO" id="GO:0035091">
    <property type="term" value="F:phosphatidylinositol binding"/>
    <property type="evidence" value="ECO:0000250"/>
    <property type="project" value="UniProtKB"/>
</dbReference>
<dbReference type="GO" id="GO:0004672">
    <property type="term" value="F:protein kinase activity"/>
    <property type="evidence" value="ECO:0000314"/>
    <property type="project" value="MGI"/>
</dbReference>
<dbReference type="GO" id="GO:0004713">
    <property type="term" value="F:protein tyrosine kinase activity"/>
    <property type="evidence" value="ECO:0000250"/>
    <property type="project" value="UniProtKB"/>
</dbReference>
<dbReference type="GO" id="GO:0060038">
    <property type="term" value="P:cardiac muscle cell proliferation"/>
    <property type="evidence" value="ECO:0007669"/>
    <property type="project" value="Ensembl"/>
</dbReference>
<dbReference type="GO" id="GO:0071305">
    <property type="term" value="P:cellular response to vitamin D"/>
    <property type="evidence" value="ECO:0007669"/>
    <property type="project" value="Ensembl"/>
</dbReference>
<dbReference type="GO" id="GO:0007098">
    <property type="term" value="P:centrosome cycle"/>
    <property type="evidence" value="ECO:0000315"/>
    <property type="project" value="MGI"/>
</dbReference>
<dbReference type="GO" id="GO:0001578">
    <property type="term" value="P:microtubule bundle formation"/>
    <property type="evidence" value="ECO:0000314"/>
    <property type="project" value="MGI"/>
</dbReference>
<dbReference type="GO" id="GO:0051450">
    <property type="term" value="P:myoblast proliferation"/>
    <property type="evidence" value="ECO:0007669"/>
    <property type="project" value="Ensembl"/>
</dbReference>
<dbReference type="GO" id="GO:0018108">
    <property type="term" value="P:peptidyl-tyrosine phosphorylation"/>
    <property type="evidence" value="ECO:0000250"/>
    <property type="project" value="UniProtKB"/>
</dbReference>
<dbReference type="GO" id="GO:0031116">
    <property type="term" value="P:positive regulation of microtubule polymerization"/>
    <property type="evidence" value="ECO:0000250"/>
    <property type="project" value="UniProtKB"/>
</dbReference>
<dbReference type="GO" id="GO:0045657">
    <property type="term" value="P:positive regulation of monocyte differentiation"/>
    <property type="evidence" value="ECO:0007669"/>
    <property type="project" value="Ensembl"/>
</dbReference>
<dbReference type="GO" id="GO:0045639">
    <property type="term" value="P:positive regulation of myeloid cell differentiation"/>
    <property type="evidence" value="ECO:0000250"/>
    <property type="project" value="UniProtKB"/>
</dbReference>
<dbReference type="GO" id="GO:0010976">
    <property type="term" value="P:positive regulation of neuron projection development"/>
    <property type="evidence" value="ECO:0000250"/>
    <property type="project" value="UniProtKB"/>
</dbReference>
<dbReference type="GO" id="GO:0030155">
    <property type="term" value="P:regulation of cell adhesion"/>
    <property type="evidence" value="ECO:0000250"/>
    <property type="project" value="UniProtKB"/>
</dbReference>
<dbReference type="GO" id="GO:0045595">
    <property type="term" value="P:regulation of cell differentiation"/>
    <property type="evidence" value="ECO:0000250"/>
    <property type="project" value="UniProtKB"/>
</dbReference>
<dbReference type="GO" id="GO:2000145">
    <property type="term" value="P:regulation of cell motility"/>
    <property type="evidence" value="ECO:0000250"/>
    <property type="project" value="UniProtKB"/>
</dbReference>
<dbReference type="GO" id="GO:0042127">
    <property type="term" value="P:regulation of cell population proliferation"/>
    <property type="evidence" value="ECO:0000250"/>
    <property type="project" value="UniProtKB"/>
</dbReference>
<dbReference type="GO" id="GO:0008360">
    <property type="term" value="P:regulation of cell shape"/>
    <property type="evidence" value="ECO:0000250"/>
    <property type="project" value="UniProtKB"/>
</dbReference>
<dbReference type="GO" id="GO:0043304">
    <property type="term" value="P:regulation of mast cell degranulation"/>
    <property type="evidence" value="ECO:0000250"/>
    <property type="project" value="UniProtKB"/>
</dbReference>
<dbReference type="CDD" id="cd07685">
    <property type="entry name" value="F-BAR_Fes"/>
    <property type="match status" value="1"/>
</dbReference>
<dbReference type="CDD" id="cd10361">
    <property type="entry name" value="SH2_Fps_family"/>
    <property type="match status" value="1"/>
</dbReference>
<dbReference type="FunFam" id="1.10.287.160:FF:000006">
    <property type="entry name" value="Tyrosine-protein kinase"/>
    <property type="match status" value="1"/>
</dbReference>
<dbReference type="FunFam" id="1.10.510.10:FF:000212">
    <property type="entry name" value="Tyrosine-protein kinase"/>
    <property type="match status" value="1"/>
</dbReference>
<dbReference type="FunFam" id="1.20.1270.60:FF:000030">
    <property type="entry name" value="Tyrosine-protein kinase"/>
    <property type="match status" value="1"/>
</dbReference>
<dbReference type="FunFam" id="3.30.200.20:FF:000089">
    <property type="entry name" value="Tyrosine-protein kinase"/>
    <property type="match status" value="1"/>
</dbReference>
<dbReference type="FunFam" id="3.30.505.10:FF:000020">
    <property type="entry name" value="Tyrosine-protein kinase"/>
    <property type="match status" value="1"/>
</dbReference>
<dbReference type="Gene3D" id="1.20.1270.60">
    <property type="entry name" value="Arfaptin homology (AH) domain/BAR domain"/>
    <property type="match status" value="1"/>
</dbReference>
<dbReference type="Gene3D" id="1.10.287.160">
    <property type="entry name" value="HR1 repeat"/>
    <property type="match status" value="1"/>
</dbReference>
<dbReference type="Gene3D" id="3.30.200.20">
    <property type="entry name" value="Phosphorylase Kinase, domain 1"/>
    <property type="match status" value="1"/>
</dbReference>
<dbReference type="Gene3D" id="3.30.505.10">
    <property type="entry name" value="SH2 domain"/>
    <property type="match status" value="1"/>
</dbReference>
<dbReference type="Gene3D" id="1.10.510.10">
    <property type="entry name" value="Transferase(Phosphotransferase) domain 1"/>
    <property type="match status" value="1"/>
</dbReference>
<dbReference type="InterPro" id="IPR027267">
    <property type="entry name" value="AH/BAR_dom_sf"/>
</dbReference>
<dbReference type="InterPro" id="IPR031160">
    <property type="entry name" value="F_BAR"/>
</dbReference>
<dbReference type="InterPro" id="IPR001060">
    <property type="entry name" value="FCH_dom"/>
</dbReference>
<dbReference type="InterPro" id="IPR035849">
    <property type="entry name" value="Fes/Fps/Fer_SH2"/>
</dbReference>
<dbReference type="InterPro" id="IPR011009">
    <property type="entry name" value="Kinase-like_dom_sf"/>
</dbReference>
<dbReference type="InterPro" id="IPR050198">
    <property type="entry name" value="Non-receptor_tyrosine_kinases"/>
</dbReference>
<dbReference type="InterPro" id="IPR000719">
    <property type="entry name" value="Prot_kinase_dom"/>
</dbReference>
<dbReference type="InterPro" id="IPR017441">
    <property type="entry name" value="Protein_kinase_ATP_BS"/>
</dbReference>
<dbReference type="InterPro" id="IPR001245">
    <property type="entry name" value="Ser-Thr/Tyr_kinase_cat_dom"/>
</dbReference>
<dbReference type="InterPro" id="IPR000980">
    <property type="entry name" value="SH2"/>
</dbReference>
<dbReference type="InterPro" id="IPR036860">
    <property type="entry name" value="SH2_dom_sf"/>
</dbReference>
<dbReference type="InterPro" id="IPR016250">
    <property type="entry name" value="Tyr-prot_kinase_Fes/Fps"/>
</dbReference>
<dbReference type="InterPro" id="IPR008266">
    <property type="entry name" value="Tyr_kinase_AS"/>
</dbReference>
<dbReference type="InterPro" id="IPR020635">
    <property type="entry name" value="Tyr_kinase_cat_dom"/>
</dbReference>
<dbReference type="PANTHER" id="PTHR24418">
    <property type="entry name" value="TYROSINE-PROTEIN KINASE"/>
    <property type="match status" value="1"/>
</dbReference>
<dbReference type="Pfam" id="PF00611">
    <property type="entry name" value="FCH"/>
    <property type="match status" value="1"/>
</dbReference>
<dbReference type="Pfam" id="PF07714">
    <property type="entry name" value="PK_Tyr_Ser-Thr"/>
    <property type="match status" value="1"/>
</dbReference>
<dbReference type="Pfam" id="PF00017">
    <property type="entry name" value="SH2"/>
    <property type="match status" value="1"/>
</dbReference>
<dbReference type="PIRSF" id="PIRSF000632">
    <property type="entry name" value="TyrPK_fps"/>
    <property type="match status" value="1"/>
</dbReference>
<dbReference type="PRINTS" id="PR00401">
    <property type="entry name" value="SH2DOMAIN"/>
</dbReference>
<dbReference type="PRINTS" id="PR00109">
    <property type="entry name" value="TYRKINASE"/>
</dbReference>
<dbReference type="SMART" id="SM00055">
    <property type="entry name" value="FCH"/>
    <property type="match status" value="1"/>
</dbReference>
<dbReference type="SMART" id="SM00252">
    <property type="entry name" value="SH2"/>
    <property type="match status" value="1"/>
</dbReference>
<dbReference type="SMART" id="SM00219">
    <property type="entry name" value="TyrKc"/>
    <property type="match status" value="1"/>
</dbReference>
<dbReference type="SUPFAM" id="SSF103657">
    <property type="entry name" value="BAR/IMD domain-like"/>
    <property type="match status" value="1"/>
</dbReference>
<dbReference type="SUPFAM" id="SSF56112">
    <property type="entry name" value="Protein kinase-like (PK-like)"/>
    <property type="match status" value="1"/>
</dbReference>
<dbReference type="SUPFAM" id="SSF55550">
    <property type="entry name" value="SH2 domain"/>
    <property type="match status" value="1"/>
</dbReference>
<dbReference type="PROSITE" id="PS51741">
    <property type="entry name" value="F_BAR"/>
    <property type="match status" value="1"/>
</dbReference>
<dbReference type="PROSITE" id="PS00107">
    <property type="entry name" value="PROTEIN_KINASE_ATP"/>
    <property type="match status" value="1"/>
</dbReference>
<dbReference type="PROSITE" id="PS50011">
    <property type="entry name" value="PROTEIN_KINASE_DOM"/>
    <property type="match status" value="1"/>
</dbReference>
<dbReference type="PROSITE" id="PS00109">
    <property type="entry name" value="PROTEIN_KINASE_TYR"/>
    <property type="match status" value="1"/>
</dbReference>
<dbReference type="PROSITE" id="PS50001">
    <property type="entry name" value="SH2"/>
    <property type="match status" value="1"/>
</dbReference>
<protein>
    <recommendedName>
        <fullName>Tyrosine-protein kinase Fes/Fps</fullName>
        <ecNumber>2.7.10.2</ecNumber>
    </recommendedName>
    <alternativeName>
        <fullName>Proto-oncogene c-Fes</fullName>
    </alternativeName>
</protein>
<evidence type="ECO:0000250" key="1"/>
<evidence type="ECO:0000250" key="2">
    <source>
        <dbReference type="UniProtKB" id="P07332"/>
    </source>
</evidence>
<evidence type="ECO:0000255" key="3"/>
<evidence type="ECO:0000255" key="4">
    <source>
        <dbReference type="PROSITE-ProRule" id="PRU00159"/>
    </source>
</evidence>
<evidence type="ECO:0000255" key="5">
    <source>
        <dbReference type="PROSITE-ProRule" id="PRU00191"/>
    </source>
</evidence>
<evidence type="ECO:0000255" key="6">
    <source>
        <dbReference type="PROSITE-ProRule" id="PRU01077"/>
    </source>
</evidence>
<evidence type="ECO:0000255" key="7">
    <source>
        <dbReference type="PROSITE-ProRule" id="PRU10028"/>
    </source>
</evidence>
<evidence type="ECO:0000256" key="8">
    <source>
        <dbReference type="SAM" id="MobiDB-lite"/>
    </source>
</evidence>
<evidence type="ECO:0000269" key="9">
    <source>
    </source>
</evidence>
<evidence type="ECO:0000269" key="10">
    <source>
    </source>
</evidence>
<evidence type="ECO:0000269" key="11">
    <source>
    </source>
</evidence>
<evidence type="ECO:0000269" key="12">
    <source>
    </source>
</evidence>
<evidence type="ECO:0000269" key="13">
    <source>
    </source>
</evidence>
<evidence type="ECO:0000269" key="14">
    <source>
    </source>
</evidence>
<evidence type="ECO:0000305" key="15"/>
<evidence type="ECO:0007744" key="16">
    <source>
    </source>
</evidence>
<comment type="function">
    <text evidence="11 12 13">Tyrosine-protein kinase that acts downstream of cell surface receptors and plays a role in the regulation of the actin cytoskeleton, microtubule assembly, cell attachment and cell spreading. Plays a role in FCER1 (high affinity immunoglobulin epsilon receptor)-mediated signaling in mast cells. Acts down-stream of the activated FCER1 receptor and the mast/stem cell growth factor receptor KIT. Plays a role in the regulation of mast cell degranulation. Plays a role in the regulation of cell differentiation and promotes neurite outgrowth in response to NGF signaling. Plays a role in cell scattering and cell migration in response to HGF-induced activation of EZR. Phosphorylates BCR and down-regulates BCR kinase activity. Phosphorylates HCLS1/HS1, PECAM1, STAT3 and TRIM28.</text>
</comment>
<comment type="catalytic activity">
    <reaction evidence="7">
        <text>L-tyrosyl-[protein] + ATP = O-phospho-L-tyrosyl-[protein] + ADP + H(+)</text>
        <dbReference type="Rhea" id="RHEA:10596"/>
        <dbReference type="Rhea" id="RHEA-COMP:10136"/>
        <dbReference type="Rhea" id="RHEA-COMP:20101"/>
        <dbReference type="ChEBI" id="CHEBI:15378"/>
        <dbReference type="ChEBI" id="CHEBI:30616"/>
        <dbReference type="ChEBI" id="CHEBI:46858"/>
        <dbReference type="ChEBI" id="CHEBI:61978"/>
        <dbReference type="ChEBI" id="CHEBI:456216"/>
        <dbReference type="EC" id="2.7.10.2"/>
    </reaction>
</comment>
<comment type="activity regulation">
    <text evidence="11">Kinase activity is tightly regulated. Activated in response to signaling from a cell surface receptor. Activation probably requires binding of a substrate via the SH2 domain, plus autophosphorylation at Tyr-713. Present in an inactive form in the absence of activating stimuli.</text>
</comment>
<comment type="subunit">
    <text evidence="1">Homooligomer. Interacts with BCR. Interacts (when activated, via coiled coil domain) with TRIM28. Interacts (via SH2 domain) with phosphorylated EZR, MS4A2/FCER1B and HCLS1/HS1. Interacts with phosphorylated KIT. Interacts with FLT3. Interacts (via F-BAR domain) with soluble tubulin. Interacts (via SH2 domain) with microtubules (By similarity).</text>
</comment>
<comment type="interaction">
    <interactant intactId="EBI-771815">
        <id>P16879</id>
    </interactant>
    <interactant intactId="EBI-1265227">
        <id>P01901</id>
        <label>H2-K1</label>
    </interactant>
    <organismsDiffer>false</organismsDiffer>
    <experiments>3</experiments>
</comment>
<comment type="interaction">
    <interactant intactId="EBI-771815">
        <id>P16879</id>
    </interactant>
    <interactant intactId="EBI-397236">
        <id>P35235</id>
        <label>Ptpn11</label>
    </interactant>
    <organismsDiffer>false</organismsDiffer>
    <experiments>2</experiments>
</comment>
<comment type="subcellular location">
    <subcellularLocation>
        <location evidence="1">Cytoplasm</location>
        <location evidence="1">Cytosol</location>
    </subcellularLocation>
    <subcellularLocation>
        <location evidence="1">Cytoplasm</location>
        <location evidence="1">Cytoskeleton</location>
    </subcellularLocation>
    <subcellularLocation>
        <location evidence="1">Cell membrane</location>
        <topology evidence="1">Peripheral membrane protein</topology>
        <orientation evidence="1">Cytoplasmic side</orientation>
    </subcellularLocation>
    <subcellularLocation>
        <location evidence="1">Cytoplasmic vesicle</location>
    </subcellularLocation>
    <subcellularLocation>
        <location evidence="1">Golgi apparatus</location>
    </subcellularLocation>
    <subcellularLocation>
        <location evidence="1">Cell junction</location>
        <location evidence="1">Focal adhesion</location>
    </subcellularLocation>
    <text evidence="1">Distributed throughout the cytosol when the kinase is not activated. Association with microtubules requires activation of the kinase activity. Shuttles between focal adhesions and cell-cell contacts in epithelial cells. Recruited to the lateral cell membrane in polarized epithelial cells by interaction with phosphorylated EZR. Detected at tubular membrane structures in the cytoplasm and at the cell periphery (By similarity).</text>
</comment>
<comment type="domain">
    <text evidence="1">The coiled coil domains are important for regulating the kinase activity. They mediate homooligomerization and probably also interaction with other proteins (By similarity).</text>
</comment>
<comment type="domain">
    <text evidence="1">The N-terminal region including the first coiled coil domain mediates interaction with phosphoinositide-containing membranes.</text>
</comment>
<comment type="PTM">
    <text evidence="1">Autophosphorylated on Tyr-713 in response to FGF2. Phosphorylated by LYN in response to FCER1 activation. Phosphorylated by HCK (By similarity).</text>
</comment>
<comment type="disruption phenotype">
    <text evidence="9 10">No visible phenotype. Mice are fertile and healthy, display slightly reduced numbers of myeloid cells and are more sensitive to lipopolysaccharide (LPS). Mice lacking both Fps/Fes and Fer activity are viable and fertile, but produce fewer offspring than normal. They display elevated levels of circulating neutrophils, erythrocytes and platelets, while other cell counts are normal.</text>
</comment>
<comment type="miscellaneous">
    <text evidence="14">In a BRAF V600E-driven, PTEN deficient and FES deficient melanoma model, tumor growth is accelerated due to an increased proliferation of melanoma cells.</text>
</comment>
<comment type="similarity">
    <text evidence="4">Belongs to the protein kinase superfamily. Tyr protein kinase family. Fes/fps subfamily.</text>
</comment>
<reference key="1">
    <citation type="journal article" date="1988" name="Oncogene">
        <title>Isolation and structural analysis of murine c-fes cDNA clones.</title>
        <authorList>
            <person name="Wilks A.F."/>
            <person name="Kurban R.R."/>
        </authorList>
    </citation>
    <scope>NUCLEOTIDE SEQUENCE [MRNA]</scope>
</reference>
<reference key="2">
    <citation type="journal article" date="2002" name="Mol. Cell. Biol.">
        <title>Enhanced endotoxin sensitivity in fps/fes-null mice with minimal defects in hematopoietic homeostasis.</title>
        <authorList>
            <person name="Zirngibl R.A."/>
            <person name="Senis Y."/>
            <person name="Greer P.A."/>
        </authorList>
    </citation>
    <scope>NUCLEOTIDE SEQUENCE [GENOMIC DNA]</scope>
    <scope>DISRUPTION PHENOTYPE</scope>
    <source>
        <strain>129/SvJ</strain>
    </source>
</reference>
<reference key="3">
    <citation type="journal article" date="2005" name="Science">
        <title>The transcriptional landscape of the mammalian genome.</title>
        <authorList>
            <person name="Carninci P."/>
            <person name="Kasukawa T."/>
            <person name="Katayama S."/>
            <person name="Gough J."/>
            <person name="Frith M.C."/>
            <person name="Maeda N."/>
            <person name="Oyama R."/>
            <person name="Ravasi T."/>
            <person name="Lenhard B."/>
            <person name="Wells C."/>
            <person name="Kodzius R."/>
            <person name="Shimokawa K."/>
            <person name="Bajic V.B."/>
            <person name="Brenner S.E."/>
            <person name="Batalov S."/>
            <person name="Forrest A.R."/>
            <person name="Zavolan M."/>
            <person name="Davis M.J."/>
            <person name="Wilming L.G."/>
            <person name="Aidinis V."/>
            <person name="Allen J.E."/>
            <person name="Ambesi-Impiombato A."/>
            <person name="Apweiler R."/>
            <person name="Aturaliya R.N."/>
            <person name="Bailey T.L."/>
            <person name="Bansal M."/>
            <person name="Baxter L."/>
            <person name="Beisel K.W."/>
            <person name="Bersano T."/>
            <person name="Bono H."/>
            <person name="Chalk A.M."/>
            <person name="Chiu K.P."/>
            <person name="Choudhary V."/>
            <person name="Christoffels A."/>
            <person name="Clutterbuck D.R."/>
            <person name="Crowe M.L."/>
            <person name="Dalla E."/>
            <person name="Dalrymple B.P."/>
            <person name="de Bono B."/>
            <person name="Della Gatta G."/>
            <person name="di Bernardo D."/>
            <person name="Down T."/>
            <person name="Engstrom P."/>
            <person name="Fagiolini M."/>
            <person name="Faulkner G."/>
            <person name="Fletcher C.F."/>
            <person name="Fukushima T."/>
            <person name="Furuno M."/>
            <person name="Futaki S."/>
            <person name="Gariboldi M."/>
            <person name="Georgii-Hemming P."/>
            <person name="Gingeras T.R."/>
            <person name="Gojobori T."/>
            <person name="Green R.E."/>
            <person name="Gustincich S."/>
            <person name="Harbers M."/>
            <person name="Hayashi Y."/>
            <person name="Hensch T.K."/>
            <person name="Hirokawa N."/>
            <person name="Hill D."/>
            <person name="Huminiecki L."/>
            <person name="Iacono M."/>
            <person name="Ikeo K."/>
            <person name="Iwama A."/>
            <person name="Ishikawa T."/>
            <person name="Jakt M."/>
            <person name="Kanapin A."/>
            <person name="Katoh M."/>
            <person name="Kawasawa Y."/>
            <person name="Kelso J."/>
            <person name="Kitamura H."/>
            <person name="Kitano H."/>
            <person name="Kollias G."/>
            <person name="Krishnan S.P."/>
            <person name="Kruger A."/>
            <person name="Kummerfeld S.K."/>
            <person name="Kurochkin I.V."/>
            <person name="Lareau L.F."/>
            <person name="Lazarevic D."/>
            <person name="Lipovich L."/>
            <person name="Liu J."/>
            <person name="Liuni S."/>
            <person name="McWilliam S."/>
            <person name="Madan Babu M."/>
            <person name="Madera M."/>
            <person name="Marchionni L."/>
            <person name="Matsuda H."/>
            <person name="Matsuzawa S."/>
            <person name="Miki H."/>
            <person name="Mignone F."/>
            <person name="Miyake S."/>
            <person name="Morris K."/>
            <person name="Mottagui-Tabar S."/>
            <person name="Mulder N."/>
            <person name="Nakano N."/>
            <person name="Nakauchi H."/>
            <person name="Ng P."/>
            <person name="Nilsson R."/>
            <person name="Nishiguchi S."/>
            <person name="Nishikawa S."/>
            <person name="Nori F."/>
            <person name="Ohara O."/>
            <person name="Okazaki Y."/>
            <person name="Orlando V."/>
            <person name="Pang K.C."/>
            <person name="Pavan W.J."/>
            <person name="Pavesi G."/>
            <person name="Pesole G."/>
            <person name="Petrovsky N."/>
            <person name="Piazza S."/>
            <person name="Reed J."/>
            <person name="Reid J.F."/>
            <person name="Ring B.Z."/>
            <person name="Ringwald M."/>
            <person name="Rost B."/>
            <person name="Ruan Y."/>
            <person name="Salzberg S.L."/>
            <person name="Sandelin A."/>
            <person name="Schneider C."/>
            <person name="Schoenbach C."/>
            <person name="Sekiguchi K."/>
            <person name="Semple C.A."/>
            <person name="Seno S."/>
            <person name="Sessa L."/>
            <person name="Sheng Y."/>
            <person name="Shibata Y."/>
            <person name="Shimada H."/>
            <person name="Shimada K."/>
            <person name="Silva D."/>
            <person name="Sinclair B."/>
            <person name="Sperling S."/>
            <person name="Stupka E."/>
            <person name="Sugiura K."/>
            <person name="Sultana R."/>
            <person name="Takenaka Y."/>
            <person name="Taki K."/>
            <person name="Tammoja K."/>
            <person name="Tan S.L."/>
            <person name="Tang S."/>
            <person name="Taylor M.S."/>
            <person name="Tegner J."/>
            <person name="Teichmann S.A."/>
            <person name="Ueda H.R."/>
            <person name="van Nimwegen E."/>
            <person name="Verardo R."/>
            <person name="Wei C.L."/>
            <person name="Yagi K."/>
            <person name="Yamanishi H."/>
            <person name="Zabarovsky E."/>
            <person name="Zhu S."/>
            <person name="Zimmer A."/>
            <person name="Hide W."/>
            <person name="Bult C."/>
            <person name="Grimmond S.M."/>
            <person name="Teasdale R.D."/>
            <person name="Liu E.T."/>
            <person name="Brusic V."/>
            <person name="Quackenbush J."/>
            <person name="Wahlestedt C."/>
            <person name="Mattick J.S."/>
            <person name="Hume D.A."/>
            <person name="Kai C."/>
            <person name="Sasaki D."/>
            <person name="Tomaru Y."/>
            <person name="Fukuda S."/>
            <person name="Kanamori-Katayama M."/>
            <person name="Suzuki M."/>
            <person name="Aoki J."/>
            <person name="Arakawa T."/>
            <person name="Iida J."/>
            <person name="Imamura K."/>
            <person name="Itoh M."/>
            <person name="Kato T."/>
            <person name="Kawaji H."/>
            <person name="Kawagashira N."/>
            <person name="Kawashima T."/>
            <person name="Kojima M."/>
            <person name="Kondo S."/>
            <person name="Konno H."/>
            <person name="Nakano K."/>
            <person name="Ninomiya N."/>
            <person name="Nishio T."/>
            <person name="Okada M."/>
            <person name="Plessy C."/>
            <person name="Shibata K."/>
            <person name="Shiraki T."/>
            <person name="Suzuki S."/>
            <person name="Tagami M."/>
            <person name="Waki K."/>
            <person name="Watahiki A."/>
            <person name="Okamura-Oho Y."/>
            <person name="Suzuki H."/>
            <person name="Kawai J."/>
            <person name="Hayashizaki Y."/>
        </authorList>
    </citation>
    <scope>NUCLEOTIDE SEQUENCE [LARGE SCALE MRNA]</scope>
    <source>
        <strain>C57BL/6J</strain>
        <strain>NOD</strain>
        <tissue>Spleen</tissue>
    </source>
</reference>
<reference key="4">
    <citation type="journal article" date="2004" name="Genome Res.">
        <title>The status, quality, and expansion of the NIH full-length cDNA project: the Mammalian Gene Collection (MGC).</title>
        <authorList>
            <consortium name="The MGC Project Team"/>
        </authorList>
    </citation>
    <scope>NUCLEOTIDE SEQUENCE [LARGE SCALE MRNA]</scope>
</reference>
<reference key="5">
    <citation type="journal article" date="1989" name="Gene">
        <title>The application of the polymerase chain reaction to cloning members of the protein tyrosine kinase family.</title>
        <authorList>
            <person name="Wilks A.F."/>
            <person name="Kurban R.R."/>
            <person name="Hovens C.M."/>
            <person name="Ralph S.J."/>
        </authorList>
    </citation>
    <scope>NUCLEOTIDE SEQUENCE [MRNA] OF 680-749</scope>
</reference>
<reference key="6">
    <citation type="journal article" date="2003" name="Exp. Hematol.">
        <title>Fps/Fes and Fer protein-tyrosine kinases play redundant roles in regulating hematopoiesis.</title>
        <authorList>
            <person name="Senis Y.A."/>
            <person name="Craig A.W."/>
            <person name="Greer P.A."/>
        </authorList>
    </citation>
    <scope>DISRUPTION PHENOTYPE</scope>
</reference>
<reference key="7">
    <citation type="journal article" date="2006" name="J. Biol. Chem.">
        <title>Fer and Fps/Fes participate in a Lyn-dependent pathway from FcepsilonRI to platelet-endothelial cell adhesion molecule 1 to limit mast cell activation.</title>
        <authorList>
            <person name="Udell C.M."/>
            <person name="Samayawardhena L.A."/>
            <person name="Kawakami Y."/>
            <person name="Kawakami T."/>
            <person name="Craig A.W."/>
        </authorList>
    </citation>
    <scope>FUNCTION IN MAST CELL ACTIVATION AND PHOSPHORYLATION OF PECAM1</scope>
    <scope>PHOSPHORYLATION</scope>
    <scope>ACTIVITY REGULATION</scope>
</reference>
<reference key="8">
    <citation type="journal article" date="2007" name="Blood">
        <title>The tyrosine kinase FES is an essential effector of KITD816V proliferation signal.</title>
        <authorList>
            <person name="Voisset E."/>
            <person name="Lopez S."/>
            <person name="Dubreuil P."/>
            <person name="De Sepulveda P."/>
        </authorList>
    </citation>
    <scope>FUNCTION</scope>
    <scope>INTERACTION WITH KIT</scope>
    <scope>PHOSPHORYLATION</scope>
    <scope>IDENTIFICATION BY MASS SPECTROMETRY</scope>
</reference>
<reference key="9">
    <citation type="journal article" date="2007" name="J. Immunol.">
        <title>Quantitative time-resolved phosphoproteomic analysis of mast cell signaling.</title>
        <authorList>
            <person name="Cao L."/>
            <person name="Yu K."/>
            <person name="Banh C."/>
            <person name="Nguyen V."/>
            <person name="Ritz A."/>
            <person name="Raphael B.J."/>
            <person name="Kawakami Y."/>
            <person name="Kawakami T."/>
            <person name="Salomon A.R."/>
        </authorList>
    </citation>
    <scope>PHOSPHORYLATION [LARGE SCALE ANALYSIS] AT TYR-713</scope>
    <scope>IDENTIFICATION BY MASS SPECTROMETRY [LARGE SCALE ANALYSIS]</scope>
    <source>
        <tissue>Mast cell</tissue>
    </source>
</reference>
<reference key="10">
    <citation type="journal article" date="2010" name="Cell. Signal.">
        <title>Fps/Fes protein-tyrosine kinase regulates mast cell adhesion and migration downstream of Kit and beta1 integrin receptors.</title>
        <authorList>
            <person name="Smith J.A."/>
            <person name="Samayawardhena L.A."/>
            <person name="Craig A.W."/>
        </authorList>
    </citation>
    <scope>FUNCTION</scope>
</reference>
<reference key="11">
    <citation type="journal article" date="2017" name="J. Clin. Invest.">
        <title>Comparative oncogenomics identifies tyrosine kinase FES as a tumor suppressor in melanoma.</title>
        <authorList>
            <person name="Olvedy M."/>
            <person name="Tisserand J.C."/>
            <person name="Luciani F."/>
            <person name="Boeckx B."/>
            <person name="Wouters J."/>
            <person name="Lopez S."/>
            <person name="Rambow F."/>
            <person name="Aibar S."/>
            <person name="Thienpont B."/>
            <person name="Barra J."/>
            <person name="Koehler C."/>
            <person name="Radaelli E."/>
            <person name="Tartare-Deckert S."/>
            <person name="Aerts S."/>
            <person name="Dubreuil P."/>
            <person name="van den Oord J.J."/>
            <person name="Lambrechts D."/>
            <person name="De Sepulveda P."/>
            <person name="Marine J.C."/>
        </authorList>
    </citation>
    <scope>ROLE AS TUMOR SUPPRESSOR IN A MELANOMA DISEASE MODEL</scope>
</reference>
<accession>P16879</accession>
<accession>Q3TD20</accession>
<accession>Q62122</accession>
<accession>Q8CG02</accession>
<keyword id="KW-0067">ATP-binding</keyword>
<keyword id="KW-0965">Cell junction</keyword>
<keyword id="KW-1003">Cell membrane</keyword>
<keyword id="KW-0175">Coiled coil</keyword>
<keyword id="KW-0963">Cytoplasm</keyword>
<keyword id="KW-0968">Cytoplasmic vesicle</keyword>
<keyword id="KW-0206">Cytoskeleton</keyword>
<keyword id="KW-0333">Golgi apparatus</keyword>
<keyword id="KW-0418">Kinase</keyword>
<keyword id="KW-0446">Lipid-binding</keyword>
<keyword id="KW-0472">Membrane</keyword>
<keyword id="KW-0547">Nucleotide-binding</keyword>
<keyword id="KW-0597">Phosphoprotein</keyword>
<keyword id="KW-0656">Proto-oncogene</keyword>
<keyword id="KW-1185">Reference proteome</keyword>
<keyword id="KW-0808">Transferase</keyword>
<keyword id="KW-0043">Tumor suppressor</keyword>
<keyword id="KW-0829">Tyrosine-protein kinase</keyword>
<gene>
    <name type="primary">Fes</name>
    <name type="synonym">Fps</name>
</gene>
<feature type="chain" id="PRO_0000088089" description="Tyrosine-protein kinase Fes/Fps">
    <location>
        <begin position="1"/>
        <end position="822"/>
    </location>
</feature>
<feature type="domain" description="F-BAR" evidence="6">
    <location>
        <begin position="1"/>
        <end position="260"/>
    </location>
</feature>
<feature type="domain" description="SH2" evidence="5">
    <location>
        <begin position="460"/>
        <end position="549"/>
    </location>
</feature>
<feature type="domain" description="Protein kinase" evidence="4">
    <location>
        <begin position="561"/>
        <end position="818"/>
    </location>
</feature>
<feature type="region of interest" description="Important for interaction with membranes containing phosphoinositides" evidence="1">
    <location>
        <begin position="1"/>
        <end position="300"/>
    </location>
</feature>
<feature type="region of interest" description="Disordered" evidence="8">
    <location>
        <begin position="392"/>
        <end position="420"/>
    </location>
</feature>
<feature type="coiled-coil region" evidence="3">
    <location>
        <begin position="133"/>
        <end position="165"/>
    </location>
</feature>
<feature type="coiled-coil region" evidence="3">
    <location>
        <begin position="320"/>
        <end position="369"/>
    </location>
</feature>
<feature type="compositionally biased region" description="Basic and acidic residues" evidence="8">
    <location>
        <begin position="403"/>
        <end position="419"/>
    </location>
</feature>
<feature type="active site" description="Proton acceptor" evidence="4 7">
    <location>
        <position position="683"/>
    </location>
</feature>
<feature type="binding site" evidence="4">
    <location>
        <begin position="567"/>
        <end position="575"/>
    </location>
    <ligand>
        <name>ATP</name>
        <dbReference type="ChEBI" id="CHEBI:30616"/>
    </ligand>
</feature>
<feature type="binding site" evidence="4">
    <location>
        <position position="590"/>
    </location>
    <ligand>
        <name>ATP</name>
        <dbReference type="ChEBI" id="CHEBI:30616"/>
    </ligand>
</feature>
<feature type="modified residue" description="Phosphoserine" evidence="2">
    <location>
        <position position="67"/>
    </location>
</feature>
<feature type="modified residue" description="Phosphotyrosine" evidence="2">
    <location>
        <position position="261"/>
    </location>
</feature>
<feature type="modified residue" description="Phosphoserine" evidence="2">
    <location>
        <position position="408"/>
    </location>
</feature>
<feature type="modified residue" description="Phosphoserine" evidence="2">
    <location>
        <position position="411"/>
    </location>
</feature>
<feature type="modified residue" description="Phosphothreonine" evidence="2">
    <location>
        <position position="421"/>
    </location>
</feature>
<feature type="modified residue" description="Phosphotyrosine; by autocatalysis" evidence="16">
    <location>
        <position position="713"/>
    </location>
</feature>
<feature type="modified residue" description="Phosphoserine" evidence="2">
    <location>
        <position position="716"/>
    </location>
</feature>
<feature type="sequence conflict" description="In Ref. 1; CAA31138." evidence="15" ref="1">
    <original>QH</original>
    <variation>HS</variation>
    <location>
        <begin position="110"/>
        <end position="111"/>
    </location>
</feature>
<feature type="sequence conflict" description="In Ref. 1; CAA31138 and 2; AAN33122." evidence="15" ref="1 2">
    <location>
        <begin position="413"/>
        <end position="414"/>
    </location>
</feature>
<feature type="sequence conflict" description="In Ref. 1; CAA31138." evidence="15" ref="1">
    <original>R</original>
    <variation>W</variation>
    <location>
        <position position="467"/>
    </location>
</feature>
<feature type="sequence conflict" description="In Ref. 1; CAA31138 and 2; AAN33122." evidence="15" ref="1 2">
    <original>S</original>
    <variation>T</variation>
    <location>
        <position position="477"/>
    </location>
</feature>
<feature type="sequence conflict" description="In Ref. 1; CAA31138 and 2; AAN33122." evidence="15" ref="1 2">
    <original>Q</original>
    <variation>H</variation>
    <location>
        <position position="500"/>
    </location>
</feature>
<feature type="sequence conflict" description="In Ref. 1; CAA31138 and 2; AAN33122." evidence="15" ref="1 2">
    <original>S</original>
    <variation>L</variation>
    <location>
        <position position="509"/>
    </location>
</feature>
<feature type="sequence conflict" description="In Ref. 1; CAA31138." evidence="15" ref="1">
    <original>V</original>
    <variation>M</variation>
    <location>
        <position position="664"/>
    </location>
</feature>
<feature type="sequence conflict" description="In Ref. 1; CAA31138 and 5; AAA40012." evidence="15" ref="1 5">
    <original>SA</original>
    <variation>CS</variation>
    <location>
        <begin position="716"/>
        <end position="717"/>
    </location>
</feature>
<feature type="sequence conflict" description="In Ref. 5; AAA40012." evidence="15" ref="5">
    <original>L</original>
    <variation>P</variation>
    <location>
        <position position="749"/>
    </location>
</feature>
<sequence length="822" mass="93779">MGFSSELCSPQGHGAVQQMQEAELRLLEGMRKWMAQRVKSDREYAGLLHHMSLQDSGGQSWSSGPDSPVSQSWAEITSQTENLSRVLRQHAEDLNSGPLSKLSVLIRERQHLRKTYNEQWQQLQQELTKTHSQDIEKLKTQYRTLVRDSTQARRKYQEASKDKDRDKAKDKYVRSLWKLFAHHNRYVLGVRAAQLHHHHHHRFMLPGLLQSLQDLHEEMAGILKDILQEYLEISSLVQDDVASIHRELAAAAARIQPEFEYLGFLRQYGSTPDVPPCVTFDESLLEDGEQLEPGELQLNELTLESVQHTLTSVTDELAVATKEVLSRQEMVSQLQRELQSEEQNTHPRERVQLLSKRQMLQEAIQGLQIALCSQDKLQAQQELLQSKMEQLGTGEPPAVPLLQDDRHSTSSTEQEREGGRTPTLEILKSHFSGIFRPKFSIPPPLQLVPEVQKPLYEQLWYHGAIPRAEVAELLTHSGDFLVRESQGKQEYVLSVMWDGQPRHFIIQSSDNLYRLEGDGFPSIPLLITHLLSSQQPLTKKSGVVLFRAVPKDKWVLKHEDLVLGEQIGRGNFGEVFSGRLRADNTPVAVKSCRETLPPDLKAKFLQEARILKQYNHPNIVRLIGVCTQKQPIYIVMELVQGGDFLTFLRTEGARLRVKTLLQMVGDAAAGMEYLESKCCIHRDLAARNCLVTEKNVLKISDFGMSREEADGIYAASAGLRQVPVKWTAPEALNYGRYSSESDVWSFGILLWETFSLGASPYPNLTNQQTREFVEKGHRLPCPELCPDAVFRLMEQCWAYEPGQRPSFSIICQELHSIRKRHR</sequence>
<proteinExistence type="evidence at protein level"/>
<name>FES_MOUSE</name>